<feature type="chain" id="PRO_0000349165" description="IMP cyclohydrolase">
    <location>
        <begin position="1"/>
        <end position="201"/>
    </location>
</feature>
<keyword id="KW-0378">Hydrolase</keyword>
<keyword id="KW-0658">Purine biosynthesis</keyword>
<organism>
    <name type="scientific">Methanococcus maripaludis (strain C7 / ATCC BAA-1331)</name>
    <dbReference type="NCBI Taxonomy" id="426368"/>
    <lineage>
        <taxon>Archaea</taxon>
        <taxon>Methanobacteriati</taxon>
        <taxon>Methanobacteriota</taxon>
        <taxon>Methanomada group</taxon>
        <taxon>Methanococci</taxon>
        <taxon>Methanococcales</taxon>
        <taxon>Methanococcaceae</taxon>
        <taxon>Methanococcus</taxon>
    </lineage>
</organism>
<reference key="1">
    <citation type="submission" date="2007-06" db="EMBL/GenBank/DDBJ databases">
        <title>Complete sequence of Methanococcus maripaludis C7.</title>
        <authorList>
            <consortium name="US DOE Joint Genome Institute"/>
            <person name="Copeland A."/>
            <person name="Lucas S."/>
            <person name="Lapidus A."/>
            <person name="Barry K."/>
            <person name="Glavina del Rio T."/>
            <person name="Dalin E."/>
            <person name="Tice H."/>
            <person name="Pitluck S."/>
            <person name="Clum A."/>
            <person name="Schmutz J."/>
            <person name="Larimer F."/>
            <person name="Land M."/>
            <person name="Hauser L."/>
            <person name="Kyrpides N."/>
            <person name="Anderson I."/>
            <person name="Sieprawska-Lupa M."/>
            <person name="Whitman W.B."/>
            <person name="Richardson P."/>
        </authorList>
    </citation>
    <scope>NUCLEOTIDE SEQUENCE [LARGE SCALE GENOMIC DNA]</scope>
    <source>
        <strain>C7 / ATCC BAA-1331</strain>
    </source>
</reference>
<dbReference type="EC" id="3.5.4.10" evidence="1"/>
<dbReference type="EMBL" id="CP000745">
    <property type="protein sequence ID" value="ABR65623.1"/>
    <property type="molecule type" value="Genomic_DNA"/>
</dbReference>
<dbReference type="SMR" id="A6VGP7"/>
<dbReference type="STRING" id="426368.MmarC7_0555"/>
<dbReference type="KEGG" id="mmz:MmarC7_0555"/>
<dbReference type="eggNOG" id="arCOG04727">
    <property type="taxonomic scope" value="Archaea"/>
</dbReference>
<dbReference type="HOGENOM" id="CLU_1352116_0_0_2"/>
<dbReference type="OrthoDB" id="92928at2157"/>
<dbReference type="UniPathway" id="UPA00074">
    <property type="reaction ID" value="UER00135"/>
</dbReference>
<dbReference type="GO" id="GO:0003937">
    <property type="term" value="F:IMP cyclohydrolase activity"/>
    <property type="evidence" value="ECO:0007669"/>
    <property type="project" value="UniProtKB-UniRule"/>
</dbReference>
<dbReference type="GO" id="GO:0006189">
    <property type="term" value="P:'de novo' IMP biosynthetic process"/>
    <property type="evidence" value="ECO:0007669"/>
    <property type="project" value="UniProtKB-UniRule"/>
</dbReference>
<dbReference type="Gene3D" id="3.60.20.20">
    <property type="entry name" value="Inosine monophosphate cyclohydrolase-like"/>
    <property type="match status" value="1"/>
</dbReference>
<dbReference type="HAMAP" id="MF_00705">
    <property type="entry name" value="IMP_cyclohydrol"/>
    <property type="match status" value="1"/>
</dbReference>
<dbReference type="InterPro" id="IPR010191">
    <property type="entry name" value="IMP_cyclohydrolase"/>
</dbReference>
<dbReference type="InterPro" id="IPR020600">
    <property type="entry name" value="IMP_cyclohydrolase-like"/>
</dbReference>
<dbReference type="InterPro" id="IPR036795">
    <property type="entry name" value="IMP_cyclohydrolase-like_sf"/>
</dbReference>
<dbReference type="NCBIfam" id="NF003167">
    <property type="entry name" value="PRK04151.1"/>
    <property type="match status" value="1"/>
</dbReference>
<dbReference type="NCBIfam" id="TIGR01922">
    <property type="entry name" value="purO_arch"/>
    <property type="match status" value="1"/>
</dbReference>
<dbReference type="Pfam" id="PF07826">
    <property type="entry name" value="IMP_cyclohyd"/>
    <property type="match status" value="1"/>
</dbReference>
<dbReference type="PIRSF" id="PIRSF004866">
    <property type="entry name" value="IMP_cclhdr_arch"/>
    <property type="match status" value="1"/>
</dbReference>
<dbReference type="SUPFAM" id="SSF75569">
    <property type="entry name" value="Archaeal IMP cyclohydrolase PurO"/>
    <property type="match status" value="1"/>
</dbReference>
<proteinExistence type="inferred from homology"/>
<evidence type="ECO:0000255" key="1">
    <source>
        <dbReference type="HAMAP-Rule" id="MF_00705"/>
    </source>
</evidence>
<name>PURO_METM7</name>
<sequence length="201" mass="22552">MYIGRFLVLGKTDEGNPFVTYRVSSRSFPNRVAKVMDDNTVAILPKDLEEMFKNPYITYNCVKLVGDVAIATNGSHTDIIADKIKLGLPIRDALSYSLLTMDYEKDDYNTPRIAVVLTKDSAYMGYVSENDVRIKKVELESGKAYYLSVYEACNITKHQVISVAGKTAEEVTKFVMDYEEFEKPVTAATVLLKDGFKLATL</sequence>
<comment type="function">
    <text evidence="1">Catalyzes the cyclization of 5-formylamidoimidazole-4-carboxamide ribonucleotide to IMP.</text>
</comment>
<comment type="catalytic activity">
    <reaction evidence="1">
        <text>IMP + H2O = 5-formamido-1-(5-phospho-D-ribosyl)imidazole-4-carboxamide</text>
        <dbReference type="Rhea" id="RHEA:18445"/>
        <dbReference type="ChEBI" id="CHEBI:15377"/>
        <dbReference type="ChEBI" id="CHEBI:58053"/>
        <dbReference type="ChEBI" id="CHEBI:58467"/>
        <dbReference type="EC" id="3.5.4.10"/>
    </reaction>
</comment>
<comment type="pathway">
    <text evidence="1">Purine metabolism; IMP biosynthesis via de novo pathway; IMP from 5-formamido-1-(5-phospho-D-ribosyl)imidazole-4-carboxamide: step 1/1.</text>
</comment>
<comment type="similarity">
    <text evidence="1">Belongs to the archaeal IMP cyclohydrolase family.</text>
</comment>
<accession>A6VGP7</accession>
<protein>
    <recommendedName>
        <fullName evidence="1">IMP cyclohydrolase</fullName>
        <ecNumber evidence="1">3.5.4.10</ecNumber>
    </recommendedName>
    <alternativeName>
        <fullName evidence="1">IMP synthase</fullName>
    </alternativeName>
    <alternativeName>
        <fullName evidence="1">Inosinicase</fullName>
    </alternativeName>
</protein>
<gene>
    <name evidence="1" type="primary">purO</name>
    <name type="ordered locus">MmarC7_0555</name>
</gene>